<proteinExistence type="inferred from homology"/>
<evidence type="ECO:0000255" key="1">
    <source>
        <dbReference type="HAMAP-Rule" id="MF_01143"/>
    </source>
</evidence>
<organism>
    <name type="scientific">Bacillus licheniformis (strain ATCC 14580 / DSM 13 / JCM 2505 / CCUG 7422 / NBRC 12200 / NCIMB 9375 / NCTC 10341 / NRRL NRS-1264 / Gibson 46)</name>
    <dbReference type="NCBI Taxonomy" id="279010"/>
    <lineage>
        <taxon>Bacteria</taxon>
        <taxon>Bacillati</taxon>
        <taxon>Bacillota</taxon>
        <taxon>Bacilli</taxon>
        <taxon>Bacillales</taxon>
        <taxon>Bacillaceae</taxon>
        <taxon>Bacillus</taxon>
    </lineage>
</organism>
<accession>Q65DJ4</accession>
<accession>Q62P14</accession>
<dbReference type="EMBL" id="CP000002">
    <property type="protein sequence ID" value="AAU25497.1"/>
    <property type="molecule type" value="Genomic_DNA"/>
</dbReference>
<dbReference type="EMBL" id="AE017333">
    <property type="protein sequence ID" value="AAU42870.1"/>
    <property type="molecule type" value="Genomic_DNA"/>
</dbReference>
<dbReference type="RefSeq" id="WP_003186233.1">
    <property type="nucleotide sequence ID" value="NC_006322.1"/>
</dbReference>
<dbReference type="SMR" id="Q65DJ4"/>
<dbReference type="STRING" id="279010.BL03941"/>
<dbReference type="KEGG" id="bld:BLi04057"/>
<dbReference type="KEGG" id="bli:BL03941"/>
<dbReference type="eggNOG" id="COG1380">
    <property type="taxonomic scope" value="Bacteria"/>
</dbReference>
<dbReference type="HOGENOM" id="CLU_113736_3_2_9"/>
<dbReference type="Proteomes" id="UP000000606">
    <property type="component" value="Chromosome"/>
</dbReference>
<dbReference type="GO" id="GO:0005886">
    <property type="term" value="C:plasma membrane"/>
    <property type="evidence" value="ECO:0007669"/>
    <property type="project" value="UniProtKB-SubCell"/>
</dbReference>
<dbReference type="GO" id="GO:0019835">
    <property type="term" value="P:cytolysis"/>
    <property type="evidence" value="ECO:0007669"/>
    <property type="project" value="UniProtKB-UniRule"/>
</dbReference>
<dbReference type="GO" id="GO:0031640">
    <property type="term" value="P:killing of cells of another organism"/>
    <property type="evidence" value="ECO:0007669"/>
    <property type="project" value="UniProtKB-KW"/>
</dbReference>
<dbReference type="GO" id="GO:0012501">
    <property type="term" value="P:programmed cell death"/>
    <property type="evidence" value="ECO:0007669"/>
    <property type="project" value="UniProtKB-UniRule"/>
</dbReference>
<dbReference type="HAMAP" id="MF_01143">
    <property type="entry name" value="CidA"/>
    <property type="match status" value="1"/>
</dbReference>
<dbReference type="InterPro" id="IPR023760">
    <property type="entry name" value="Holin-like_CidA"/>
</dbReference>
<dbReference type="InterPro" id="IPR005538">
    <property type="entry name" value="LrgA/CidA"/>
</dbReference>
<dbReference type="NCBIfam" id="NF002460">
    <property type="entry name" value="PRK01658.1"/>
    <property type="match status" value="1"/>
</dbReference>
<dbReference type="PANTHER" id="PTHR33931:SF2">
    <property type="entry name" value="HOLIN-LIKE PROTEIN CIDA"/>
    <property type="match status" value="1"/>
</dbReference>
<dbReference type="PANTHER" id="PTHR33931">
    <property type="entry name" value="HOLIN-LIKE PROTEIN CIDA-RELATED"/>
    <property type="match status" value="1"/>
</dbReference>
<dbReference type="Pfam" id="PF03788">
    <property type="entry name" value="LrgA"/>
    <property type="match status" value="1"/>
</dbReference>
<keyword id="KW-1003">Cell membrane</keyword>
<keyword id="KW-0204">Cytolysis</keyword>
<keyword id="KW-0472">Membrane</keyword>
<keyword id="KW-1185">Reference proteome</keyword>
<keyword id="KW-0812">Transmembrane</keyword>
<keyword id="KW-1133">Transmembrane helix</keyword>
<protein>
    <recommendedName>
        <fullName evidence="1">Holin-like protein CidA</fullName>
    </recommendedName>
</protein>
<feature type="chain" id="PRO_1000065449" description="Holin-like protein CidA">
    <location>
        <begin position="1"/>
        <end position="128"/>
    </location>
</feature>
<feature type="transmembrane region" description="Helical" evidence="1">
    <location>
        <begin position="23"/>
        <end position="43"/>
    </location>
</feature>
<feature type="transmembrane region" description="Helical" evidence="1">
    <location>
        <begin position="58"/>
        <end position="78"/>
    </location>
</feature>
<feature type="transmembrane region" description="Helical" evidence="1">
    <location>
        <begin position="84"/>
        <end position="104"/>
    </location>
</feature>
<reference key="1">
    <citation type="journal article" date="2004" name="J. Mol. Microbiol. Biotechnol.">
        <title>The complete genome sequence of Bacillus licheniformis DSM13, an organism with great industrial potential.</title>
        <authorList>
            <person name="Veith B."/>
            <person name="Herzberg C."/>
            <person name="Steckel S."/>
            <person name="Feesche J."/>
            <person name="Maurer K.H."/>
            <person name="Ehrenreich P."/>
            <person name="Baeumer S."/>
            <person name="Henne A."/>
            <person name="Liesegang H."/>
            <person name="Merkl R."/>
            <person name="Ehrenreich A."/>
            <person name="Gottschalk G."/>
        </authorList>
    </citation>
    <scope>NUCLEOTIDE SEQUENCE [LARGE SCALE GENOMIC DNA]</scope>
    <source>
        <strain>ATCC 14580 / DSM 13 / JCM 2505 / CCUG 7422 / NBRC 12200 / NCIMB 9375 / NCTC 10341 / NRRL NRS-1264 / Gibson 46</strain>
    </source>
</reference>
<reference key="2">
    <citation type="journal article" date="2004" name="Genome Biol.">
        <title>Complete genome sequence of the industrial bacterium Bacillus licheniformis and comparisons with closely related Bacillus species.</title>
        <authorList>
            <person name="Rey M.W."/>
            <person name="Ramaiya P."/>
            <person name="Nelson B.A."/>
            <person name="Brody-Karpin S.D."/>
            <person name="Zaretsky E.J."/>
            <person name="Tang M."/>
            <person name="Lopez de Leon A."/>
            <person name="Xiang H."/>
            <person name="Gusti V."/>
            <person name="Clausen I.G."/>
            <person name="Olsen P.B."/>
            <person name="Rasmussen M.D."/>
            <person name="Andersen J.T."/>
            <person name="Joergensen P.L."/>
            <person name="Larsen T.S."/>
            <person name="Sorokin A."/>
            <person name="Bolotin A."/>
            <person name="Lapidus A."/>
            <person name="Galleron N."/>
            <person name="Ehrlich S.D."/>
            <person name="Berka R.M."/>
        </authorList>
    </citation>
    <scope>NUCLEOTIDE SEQUENCE [LARGE SCALE GENOMIC DNA]</scope>
    <source>
        <strain>ATCC 14580 / DSM 13 / JCM 2505 / CCUG 7422 / NBRC 12200 / NCIMB 9375 / NCTC 10341 / NRRL NRS-1264 / Gibson 46</strain>
    </source>
</reference>
<gene>
    <name evidence="1" type="primary">cidA</name>
    <name type="ordered locus">BLi04057</name>
    <name type="ordered locus">BL03941</name>
</gene>
<comment type="function">
    <text evidence="1">Increases the activity of extracellular murein hydrolases possibly by mediating their export via hole formation. Inhibited by the antiholin-like proteins LrgAB. In an unstressed cell, the LrgAB products probably inhibit the function of the CidA protein. When a cell is stressed by the addition of antibiotics or by other factors in the environment, CidA possibly oligomerizes within the bacterial cell membrane, creating lesions that disrupt the proton motive force, which in turn results in loss of cell viability. These lesions are also hypothesized to regulate the subsequent cell lysis by either allowing the murein hydrolases access to the cell wall substrate and/or regulating their activity by a possible change in the cell wall pH that results from loss of membrane potential.</text>
</comment>
<comment type="subcellular location">
    <subcellularLocation>
        <location evidence="1">Cell membrane</location>
        <topology evidence="1">Multi-pass membrane protein</topology>
    </subcellularLocation>
</comment>
<comment type="similarity">
    <text evidence="1">Belongs to the CidA/LrgA family. CidA subfamily.</text>
</comment>
<sequence>MKTFIKGLGQVALLFLFARFMNLIVEVLHINIPGSILGIIVIFALLHFKIIKLEWIEIGALWLLAELLLFFVPSAVGIMNYGDILAEFGTSIILVVLISTFVVMVSTGMLTQLIAKRKERKKTCSSDA</sequence>
<name>CIDA_BACLD</name>